<dbReference type="EC" id="3.6.4.-" evidence="1 2"/>
<dbReference type="EMBL" id="CP000023">
    <property type="protein sequence ID" value="AAV61534.1"/>
    <property type="molecule type" value="Genomic_DNA"/>
</dbReference>
<dbReference type="RefSeq" id="WP_002948618.1">
    <property type="nucleotide sequence ID" value="NC_006448.1"/>
</dbReference>
<dbReference type="PDB" id="7PBL">
    <property type="method" value="EM"/>
    <property type="resolution" value="3.20 A"/>
    <property type="chains" value="A/B/C/D/E/F=19-330"/>
</dbReference>
<dbReference type="PDB" id="7PBM">
    <property type="method" value="EM"/>
    <property type="resolution" value="3.20 A"/>
    <property type="chains" value="A/B/C/D/E/F=19-330"/>
</dbReference>
<dbReference type="PDB" id="7PBN">
    <property type="method" value="EM"/>
    <property type="resolution" value="3.20 A"/>
    <property type="chains" value="A/B/C/D/E/F=19-330"/>
</dbReference>
<dbReference type="PDB" id="7PBO">
    <property type="method" value="EM"/>
    <property type="resolution" value="2.90 A"/>
    <property type="chains" value="A/B/C/D/E/F=19-330"/>
</dbReference>
<dbReference type="PDB" id="7PBP">
    <property type="method" value="EM"/>
    <property type="resolution" value="3.20 A"/>
    <property type="chains" value="A/B/C/D/E/F=19-330"/>
</dbReference>
<dbReference type="PDB" id="7PBQ">
    <property type="method" value="EM"/>
    <property type="resolution" value="3.10 A"/>
    <property type="chains" value="A/B/C/D/E/F=19-330"/>
</dbReference>
<dbReference type="PDB" id="7PBR">
    <property type="method" value="EM"/>
    <property type="resolution" value="3.00 A"/>
    <property type="chains" value="A/B/C/D/E/F=19-330"/>
</dbReference>
<dbReference type="PDB" id="7PBS">
    <property type="method" value="EM"/>
    <property type="resolution" value="3.30 A"/>
    <property type="chains" value="A/B/C/D/E/F=19-330"/>
</dbReference>
<dbReference type="PDB" id="7PBT">
    <property type="method" value="EM"/>
    <property type="resolution" value="3.30 A"/>
    <property type="chains" value="A/B/C/D/E/F=19-330"/>
</dbReference>
<dbReference type="PDBsum" id="7PBL"/>
<dbReference type="PDBsum" id="7PBM"/>
<dbReference type="PDBsum" id="7PBN"/>
<dbReference type="PDBsum" id="7PBO"/>
<dbReference type="PDBsum" id="7PBP"/>
<dbReference type="PDBsum" id="7PBQ"/>
<dbReference type="PDBsum" id="7PBR"/>
<dbReference type="PDBsum" id="7PBS"/>
<dbReference type="PDBsum" id="7PBT"/>
<dbReference type="SMR" id="Q5M2B1"/>
<dbReference type="STRING" id="264199.stu1936"/>
<dbReference type="GeneID" id="66899664"/>
<dbReference type="KEGG" id="stl:stu1936"/>
<dbReference type="eggNOG" id="COG2255">
    <property type="taxonomic scope" value="Bacteria"/>
</dbReference>
<dbReference type="HOGENOM" id="CLU_055599_1_0_9"/>
<dbReference type="Proteomes" id="UP000001170">
    <property type="component" value="Chromosome"/>
</dbReference>
<dbReference type="GO" id="GO:0005737">
    <property type="term" value="C:cytoplasm"/>
    <property type="evidence" value="ECO:0007669"/>
    <property type="project" value="UniProtKB-SubCell"/>
</dbReference>
<dbReference type="GO" id="GO:0048476">
    <property type="term" value="C:Holliday junction resolvase complex"/>
    <property type="evidence" value="ECO:0007669"/>
    <property type="project" value="UniProtKB-UniRule"/>
</dbReference>
<dbReference type="GO" id="GO:0005524">
    <property type="term" value="F:ATP binding"/>
    <property type="evidence" value="ECO:0007669"/>
    <property type="project" value="UniProtKB-UniRule"/>
</dbReference>
<dbReference type="GO" id="GO:0016887">
    <property type="term" value="F:ATP hydrolysis activity"/>
    <property type="evidence" value="ECO:0007669"/>
    <property type="project" value="InterPro"/>
</dbReference>
<dbReference type="GO" id="GO:0000400">
    <property type="term" value="F:four-way junction DNA binding"/>
    <property type="evidence" value="ECO:0007669"/>
    <property type="project" value="UniProtKB-UniRule"/>
</dbReference>
<dbReference type="GO" id="GO:0009378">
    <property type="term" value="F:four-way junction helicase activity"/>
    <property type="evidence" value="ECO:0007669"/>
    <property type="project" value="InterPro"/>
</dbReference>
<dbReference type="GO" id="GO:0006310">
    <property type="term" value="P:DNA recombination"/>
    <property type="evidence" value="ECO:0007669"/>
    <property type="project" value="UniProtKB-UniRule"/>
</dbReference>
<dbReference type="GO" id="GO:0006281">
    <property type="term" value="P:DNA repair"/>
    <property type="evidence" value="ECO:0007669"/>
    <property type="project" value="UniProtKB-UniRule"/>
</dbReference>
<dbReference type="CDD" id="cd00009">
    <property type="entry name" value="AAA"/>
    <property type="match status" value="1"/>
</dbReference>
<dbReference type="Gene3D" id="1.10.8.60">
    <property type="match status" value="1"/>
</dbReference>
<dbReference type="Gene3D" id="3.40.50.300">
    <property type="entry name" value="P-loop containing nucleotide triphosphate hydrolases"/>
    <property type="match status" value="1"/>
</dbReference>
<dbReference type="Gene3D" id="1.10.10.10">
    <property type="entry name" value="Winged helix-like DNA-binding domain superfamily/Winged helix DNA-binding domain"/>
    <property type="match status" value="1"/>
</dbReference>
<dbReference type="HAMAP" id="MF_00016">
    <property type="entry name" value="DNA_HJ_migration_RuvB"/>
    <property type="match status" value="1"/>
</dbReference>
<dbReference type="InterPro" id="IPR003593">
    <property type="entry name" value="AAA+_ATPase"/>
</dbReference>
<dbReference type="InterPro" id="IPR041445">
    <property type="entry name" value="AAA_lid_4"/>
</dbReference>
<dbReference type="InterPro" id="IPR004605">
    <property type="entry name" value="DNA_helicase_Holl-junc_RuvB"/>
</dbReference>
<dbReference type="InterPro" id="IPR027417">
    <property type="entry name" value="P-loop_NTPase"/>
</dbReference>
<dbReference type="InterPro" id="IPR008824">
    <property type="entry name" value="RuvB-like_N"/>
</dbReference>
<dbReference type="InterPro" id="IPR008823">
    <property type="entry name" value="RuvB_C"/>
</dbReference>
<dbReference type="InterPro" id="IPR036388">
    <property type="entry name" value="WH-like_DNA-bd_sf"/>
</dbReference>
<dbReference type="InterPro" id="IPR036390">
    <property type="entry name" value="WH_DNA-bd_sf"/>
</dbReference>
<dbReference type="NCBIfam" id="NF000868">
    <property type="entry name" value="PRK00080.1"/>
    <property type="match status" value="1"/>
</dbReference>
<dbReference type="NCBIfam" id="TIGR00635">
    <property type="entry name" value="ruvB"/>
    <property type="match status" value="1"/>
</dbReference>
<dbReference type="PANTHER" id="PTHR42848">
    <property type="match status" value="1"/>
</dbReference>
<dbReference type="PANTHER" id="PTHR42848:SF1">
    <property type="entry name" value="HOLLIDAY JUNCTION BRANCH MIGRATION COMPLEX SUBUNIT RUVB"/>
    <property type="match status" value="1"/>
</dbReference>
<dbReference type="Pfam" id="PF17864">
    <property type="entry name" value="AAA_lid_4"/>
    <property type="match status" value="1"/>
</dbReference>
<dbReference type="Pfam" id="PF05491">
    <property type="entry name" value="RuvB_C"/>
    <property type="match status" value="1"/>
</dbReference>
<dbReference type="Pfam" id="PF05496">
    <property type="entry name" value="RuvB_N"/>
    <property type="match status" value="1"/>
</dbReference>
<dbReference type="SMART" id="SM00382">
    <property type="entry name" value="AAA"/>
    <property type="match status" value="1"/>
</dbReference>
<dbReference type="SUPFAM" id="SSF52540">
    <property type="entry name" value="P-loop containing nucleoside triphosphate hydrolases"/>
    <property type="match status" value="1"/>
</dbReference>
<dbReference type="SUPFAM" id="SSF46785">
    <property type="entry name" value="Winged helix' DNA-binding domain"/>
    <property type="match status" value="1"/>
</dbReference>
<name>RUVB_STRT2</name>
<proteinExistence type="evidence at protein level"/>
<accession>Q5M2B1</accession>
<evidence type="ECO:0000255" key="1">
    <source>
        <dbReference type="HAMAP-Rule" id="MF_00016"/>
    </source>
</evidence>
<evidence type="ECO:0000269" key="2">
    <source>
    </source>
</evidence>
<evidence type="ECO:0000312" key="3">
    <source>
        <dbReference type="PDB" id="7PBL"/>
    </source>
</evidence>
<evidence type="ECO:0000312" key="4">
    <source>
        <dbReference type="PDB" id="7PBM"/>
    </source>
</evidence>
<evidence type="ECO:0000312" key="5">
    <source>
        <dbReference type="PDB" id="7PBN"/>
    </source>
</evidence>
<evidence type="ECO:0000312" key="6">
    <source>
        <dbReference type="PDB" id="7PBO"/>
    </source>
</evidence>
<evidence type="ECO:0000312" key="7">
    <source>
        <dbReference type="PDB" id="7PBP"/>
    </source>
</evidence>
<evidence type="ECO:0000312" key="8">
    <source>
        <dbReference type="PDB" id="7PBQ"/>
    </source>
</evidence>
<evidence type="ECO:0000312" key="9">
    <source>
        <dbReference type="PDB" id="7PBR"/>
    </source>
</evidence>
<evidence type="ECO:0000312" key="10">
    <source>
        <dbReference type="PDB" id="7PBS"/>
    </source>
</evidence>
<evidence type="ECO:0000312" key="11">
    <source>
        <dbReference type="PDB" id="7PBT"/>
    </source>
</evidence>
<evidence type="ECO:0007829" key="12">
    <source>
        <dbReference type="PDB" id="7PBO"/>
    </source>
</evidence>
<keyword id="KW-0002">3D-structure</keyword>
<keyword id="KW-0067">ATP-binding</keyword>
<keyword id="KW-0963">Cytoplasm</keyword>
<keyword id="KW-0227">DNA damage</keyword>
<keyword id="KW-0233">DNA recombination</keyword>
<keyword id="KW-0234">DNA repair</keyword>
<keyword id="KW-0238">DNA-binding</keyword>
<keyword id="KW-0378">Hydrolase</keyword>
<keyword id="KW-0547">Nucleotide-binding</keyword>
<keyword id="KW-1185">Reference proteome</keyword>
<protein>
    <recommendedName>
        <fullName evidence="1">Holliday junction branch migration complex subunit RuvB</fullName>
        <ecNumber evidence="1 2">3.6.4.-</ecNumber>
    </recommendedName>
</protein>
<feature type="chain" id="PRO_0000235414" description="Holliday junction branch migration complex subunit RuvB">
    <location>
        <begin position="1"/>
        <end position="333"/>
    </location>
</feature>
<feature type="region of interest" description="Large ATPase domain (RuvB-L)" evidence="1 2">
    <location>
        <begin position="1"/>
        <end position="181"/>
    </location>
</feature>
<feature type="region of interest" description="Presensor-1 beta-hairpin" evidence="2">
    <location>
        <begin position="130"/>
        <end position="148"/>
    </location>
</feature>
<feature type="region of interest" description="Small ATPAse domain (RuvB-S)" evidence="1 2">
    <location>
        <begin position="182"/>
        <end position="252"/>
    </location>
</feature>
<feature type="region of interest" description="Head domain (RuvB-H)" evidence="1 2">
    <location>
        <begin position="255"/>
        <end position="333"/>
    </location>
</feature>
<feature type="binding site" evidence="1 2">
    <location>
        <position position="20"/>
    </location>
    <ligand>
        <name>ATP</name>
        <dbReference type="ChEBI" id="CHEBI:30616"/>
    </ligand>
</feature>
<feature type="binding site" evidence="1 2">
    <location>
        <position position="21"/>
    </location>
    <ligand>
        <name>ATP</name>
        <dbReference type="ChEBI" id="CHEBI:30616"/>
    </ligand>
</feature>
<feature type="binding site" evidence="1 2">
    <location>
        <position position="62"/>
    </location>
    <ligand>
        <name>ATP</name>
        <dbReference type="ChEBI" id="CHEBI:30616"/>
    </ligand>
</feature>
<feature type="binding site" evidence="1 2">
    <location>
        <position position="65"/>
    </location>
    <ligand>
        <name>ATP</name>
        <dbReference type="ChEBI" id="CHEBI:30616"/>
    </ligand>
</feature>
<feature type="binding site" evidence="1 2">
    <location>
        <position position="66"/>
    </location>
    <ligand>
        <name>ATP</name>
        <dbReference type="ChEBI" id="CHEBI:30616"/>
    </ligand>
</feature>
<feature type="binding site" evidence="1 2">
    <location>
        <position position="66"/>
    </location>
    <ligand>
        <name>Mg(2+)</name>
        <dbReference type="ChEBI" id="CHEBI:18420"/>
    </ligand>
</feature>
<feature type="binding site" evidence="1 2">
    <location>
        <position position="67"/>
    </location>
    <ligand>
        <name>ATP</name>
        <dbReference type="ChEBI" id="CHEBI:30616"/>
    </ligand>
</feature>
<feature type="binding site" evidence="1 2">
    <location>
        <begin position="128"/>
        <end position="130"/>
    </location>
    <ligand>
        <name>ATP</name>
        <dbReference type="ChEBI" id="CHEBI:30616"/>
    </ligand>
</feature>
<feature type="binding site" evidence="1 2">
    <location>
        <position position="171"/>
    </location>
    <ligand>
        <name>ATP</name>
        <dbReference type="ChEBI" id="CHEBI:30616"/>
    </ligand>
</feature>
<feature type="binding site" evidence="1 2">
    <location>
        <position position="181"/>
    </location>
    <ligand>
        <name>ATP</name>
        <dbReference type="ChEBI" id="CHEBI:30616"/>
    </ligand>
</feature>
<feature type="binding site" evidence="1 2">
    <location>
        <position position="218"/>
    </location>
    <ligand>
        <name>ATP</name>
        <dbReference type="ChEBI" id="CHEBI:30616"/>
    </ligand>
</feature>
<feature type="binding site" evidence="1 2">
    <location>
        <position position="291"/>
    </location>
    <ligand>
        <name>DNA</name>
        <dbReference type="ChEBI" id="CHEBI:16991"/>
    </ligand>
</feature>
<feature type="binding site" evidence="1 2">
    <location>
        <position position="310"/>
    </location>
    <ligand>
        <name>DNA</name>
        <dbReference type="ChEBI" id="CHEBI:16991"/>
    </ligand>
</feature>
<feature type="binding site" evidence="1 2">
    <location>
        <position position="312"/>
    </location>
    <ligand>
        <name>DNA</name>
        <dbReference type="ChEBI" id="CHEBI:16991"/>
    </ligand>
</feature>
<feature type="binding site" evidence="1 2">
    <location>
        <position position="315"/>
    </location>
    <ligand>
        <name>DNA</name>
        <dbReference type="ChEBI" id="CHEBI:16991"/>
    </ligand>
</feature>
<feature type="turn" evidence="12">
    <location>
        <begin position="25"/>
        <end position="27"/>
    </location>
</feature>
<feature type="helix" evidence="12">
    <location>
        <begin position="32"/>
        <end position="48"/>
    </location>
</feature>
<feature type="strand" evidence="12">
    <location>
        <begin position="55"/>
        <end position="58"/>
    </location>
</feature>
<feature type="helix" evidence="12">
    <location>
        <begin position="65"/>
        <end position="76"/>
    </location>
</feature>
<feature type="strand" evidence="12">
    <location>
        <begin position="80"/>
        <end position="84"/>
    </location>
</feature>
<feature type="helix" evidence="12">
    <location>
        <begin position="85"/>
        <end position="87"/>
    </location>
</feature>
<feature type="helix" evidence="12">
    <location>
        <begin position="91"/>
        <end position="99"/>
    </location>
</feature>
<feature type="strand" evidence="12">
    <location>
        <begin position="106"/>
        <end position="110"/>
    </location>
</feature>
<feature type="helix" evidence="12">
    <location>
        <begin position="112"/>
        <end position="114"/>
    </location>
</feature>
<feature type="helix" evidence="12">
    <location>
        <begin position="117"/>
        <end position="129"/>
    </location>
</feature>
<feature type="strand" evidence="12">
    <location>
        <begin position="130"/>
        <end position="141"/>
    </location>
</feature>
<feature type="strand" evidence="12">
    <location>
        <begin position="143"/>
        <end position="148"/>
    </location>
</feature>
<feature type="strand" evidence="12">
    <location>
        <begin position="153"/>
        <end position="159"/>
    </location>
</feature>
<feature type="helix" evidence="12">
    <location>
        <begin position="161"/>
        <end position="163"/>
    </location>
</feature>
<feature type="helix" evidence="12">
    <location>
        <begin position="166"/>
        <end position="169"/>
    </location>
</feature>
<feature type="strand" evidence="12">
    <location>
        <begin position="173"/>
        <end position="177"/>
    </location>
</feature>
<feature type="helix" evidence="12">
    <location>
        <begin position="183"/>
        <end position="196"/>
    </location>
</feature>
<feature type="helix" evidence="12">
    <location>
        <begin position="203"/>
        <end position="211"/>
    </location>
</feature>
<feature type="turn" evidence="12">
    <location>
        <begin position="212"/>
        <end position="215"/>
    </location>
</feature>
<feature type="helix" evidence="12">
    <location>
        <begin position="217"/>
        <end position="231"/>
    </location>
</feature>
<feature type="strand" evidence="12">
    <location>
        <begin position="234"/>
        <end position="239"/>
    </location>
</feature>
<feature type="helix" evidence="12">
    <location>
        <begin position="241"/>
        <end position="250"/>
    </location>
</feature>
<feature type="helix" evidence="12">
    <location>
        <begin position="260"/>
        <end position="271"/>
    </location>
</feature>
<feature type="turn" evidence="12">
    <location>
        <begin position="272"/>
        <end position="275"/>
    </location>
</feature>
<feature type="helix" evidence="12">
    <location>
        <begin position="280"/>
        <end position="286"/>
    </location>
</feature>
<feature type="helix" evidence="12">
    <location>
        <begin position="291"/>
        <end position="297"/>
    </location>
</feature>
<feature type="helix" evidence="12">
    <location>
        <begin position="299"/>
        <end position="304"/>
    </location>
</feature>
<feature type="strand" evidence="12">
    <location>
        <begin position="307"/>
        <end position="311"/>
    </location>
</feature>
<feature type="strand" evidence="12">
    <location>
        <begin position="314"/>
        <end position="317"/>
    </location>
</feature>
<feature type="helix" evidence="12">
    <location>
        <begin position="319"/>
        <end position="325"/>
    </location>
</feature>
<comment type="function">
    <text evidence="1 2">The RuvA-RuvB-RuvC complex processes Holliday junction (HJ) DNA during genetic recombination and DNA repair, while the RuvA-RuvB complex plays an important role in the rescue of blocked DNA replication forks via replication fork reversal (RFR) (By similarity). Catalyzes branch migration on Holliday junction (HJ) DNA in complex with RuvA from S.typhimurim and ATP (PubMed:36002576). RuvA specifically binds to HJ cruciform DNA, conferring on it an open structure. The RuvB hexamer acts as an ATP-dependent pump, pulling dsDNA into and through the RuvAB complex. Forms 2 homohexamers on either side of HJ DNA bound by 1 or 2 RuvA tetramers; 4 subunits per hexamer contact DNA at a time. Coordinated motions by a converter formed by DNA-disengaged RuvB subunits stimulates ATP hydrolysis and nucleotide exchange. Immobilization of the converter enables RuvB to convert the ATP-contained energy into a lever motion, pulling 2 nucleotides of DNA out of the RuvA tetramer per ATP hydrolyzed, thus driving DNA branch migration. The RuvB motors rotate together with the DNA substrate, which together with the progressing nucleotide cycle forms the mechanistic basis for DNA recombination by continuous branch migration (PubMed:36002576). Branch migration allows RuvC to scan DNA until it finds its consensus sequence, where it cleaves and resolves cruciform DNA (By similarity).</text>
</comment>
<comment type="catalytic activity">
    <reaction evidence="1 2">
        <text>ATP + H2O = ADP + phosphate + H(+)</text>
        <dbReference type="Rhea" id="RHEA:13065"/>
        <dbReference type="ChEBI" id="CHEBI:15377"/>
        <dbReference type="ChEBI" id="CHEBI:15378"/>
        <dbReference type="ChEBI" id="CHEBI:30616"/>
        <dbReference type="ChEBI" id="CHEBI:43474"/>
        <dbReference type="ChEBI" id="CHEBI:456216"/>
    </reaction>
</comment>
<comment type="activity regulation">
    <text evidence="2">Binding of domain III of RuvA to a single subunit of the RuvB hexamer activates the ATPase 2 subunits away and nucleotide exchange in the adjacent subunit.</text>
</comment>
<comment type="subunit">
    <text evidence="1 2">Homohexamer. Forms an RuvA(8)-RuvB(12)-Holliday junction (HJ) complex. HJ DNA is sandwiched between 2 RuvA tetramers; dsDNA enters through RuvA and exits via RuvB. Only 4 subunits contact one DNA strand at any time. Two adjacent subunits are contacted by domain III of RuvA. An RuvB hexamer assembles on each DNA strand where it exits the tetramer. Each RuvB hexamer is contacted by two RuvA subunits (via domain III) on 2 adjacent RuvB subunits; this complex drives branch migration. In the full resolvosome a probable DNA-RuvA(4)-RuvB(12)-RuvC(2) complex forms which resolves the HJ.</text>
</comment>
<comment type="subcellular location">
    <subcellularLocation>
        <location evidence="1">Cytoplasm</location>
    </subcellularLocation>
</comment>
<comment type="domain">
    <text evidence="1 2">Has 3 domains, the large (RuvB-L) and small ATPase (RuvB-S) domains and the C-terminal head (RuvB-H) domain. The head domain binds DNA, while the ATPase domains bind ATP, ADP or are empty depending on the state of the subunit in the translocation cycle. During a single DNA translocation step the structure of each domain remains the same, but their relative positions change.</text>
</comment>
<comment type="domain">
    <text evidence="2">The presensor-1 beta hairpin in RuvB-L binds domain III of RuvA (PubMed:36002576).</text>
</comment>
<comment type="similarity">
    <text evidence="1">Belongs to the RuvB family.</text>
</comment>
<organism>
    <name type="scientific">Streptococcus thermophilus (strain ATCC BAA-250 / LMG 18311)</name>
    <dbReference type="NCBI Taxonomy" id="264199"/>
    <lineage>
        <taxon>Bacteria</taxon>
        <taxon>Bacillati</taxon>
        <taxon>Bacillota</taxon>
        <taxon>Bacilli</taxon>
        <taxon>Lactobacillales</taxon>
        <taxon>Streptococcaceae</taxon>
        <taxon>Streptococcus</taxon>
    </lineage>
</organism>
<reference key="1">
    <citation type="journal article" date="2004" name="Nat. Biotechnol.">
        <title>Complete sequence and comparative genome analysis of the dairy bacterium Streptococcus thermophilus.</title>
        <authorList>
            <person name="Bolotin A."/>
            <person name="Quinquis B."/>
            <person name="Renault P."/>
            <person name="Sorokin A."/>
            <person name="Ehrlich S.D."/>
            <person name="Kulakauskas S."/>
            <person name="Lapidus A."/>
            <person name="Goltsman E."/>
            <person name="Mazur M."/>
            <person name="Pusch G.D."/>
            <person name="Fonstein M."/>
            <person name="Overbeek R."/>
            <person name="Kyprides N."/>
            <person name="Purnelle B."/>
            <person name="Prozzi D."/>
            <person name="Ngui K."/>
            <person name="Masuy D."/>
            <person name="Hancy F."/>
            <person name="Burteau S."/>
            <person name="Boutry M."/>
            <person name="Delcour J."/>
            <person name="Goffeau A."/>
            <person name="Hols P."/>
        </authorList>
    </citation>
    <scope>NUCLEOTIDE SEQUENCE [LARGE SCALE GENOMIC DNA]</scope>
    <source>
        <strain>ATCC BAA-250 / LMG 18311</strain>
    </source>
</reference>
<reference evidence="3 4 5 6 7 8 9 10 11" key="2">
    <citation type="journal article" date="2022" name="Nature">
        <title>Mechanism of AAA+ ATPase-mediated RuvAB-Holliday junction branch migration.</title>
        <authorList>
            <person name="Wald J."/>
            <person name="Fahrenkamp D."/>
            <person name="Goessweiner-Mohr N."/>
            <person name="Lugmayr W."/>
            <person name="Ciccarelli L."/>
            <person name="Vesper O."/>
            <person name="Marlovits T.C."/>
        </authorList>
    </citation>
    <scope>STRUCTURE BY ELECTRON MICROSCOPY (2.90 ANGSTROMS) OF 19-330 IN COMPLEX WITH RUVA; NUCLEOTIDES; MG(2+) AND HOLLIDAY JUNCTION DNA</scope>
    <scope>FUNCTION</scope>
    <scope>REACTION MECHANISM</scope>
    <scope>CATALYTIC ACTIVITY</scope>
    <scope>ACTIVITY REGULATION</scope>
    <scope>SUBUNIT</scope>
    <scope>DOMAIN</scope>
    <scope>DNA-BINDING</scope>
</reference>
<gene>
    <name evidence="1" type="primary">ruvB</name>
    <name type="ordered locus">stu1936</name>
</gene>
<sequence>MARILDNDLLGDEEYVERTLRPQYFKEYIGQDKVKDQLKIFIEAAKLRDEALDHTLLFGPPGLGKTTMAFVIANEMGVNLKQTSGPAIEKAGDLVAILNDLEPGDILFIDEIHRMPMAVEEVLYSAMEDYYIDIMIGAGETSRSVHLDLPPFTLVGATTRAGMLSNPLRARFGINGHMEYYELPDLTEIVERTSEIFEMTITPEAALELARRSRGTPRIANRLLKRVRDYAQIMGDGVIDDKIADQALTMLDVDHEGLDYVDQKILRTMIEMYGGGPVGLGTLSVNIAEERETVEDMYEPYLIQKGFIMRTRTGRVATAKAYEHMGYDYTRDN</sequence>